<evidence type="ECO:0000250" key="1"/>
<evidence type="ECO:0000255" key="2"/>
<evidence type="ECO:0000255" key="3">
    <source>
        <dbReference type="PROSITE-ProRule" id="PRU00114"/>
    </source>
</evidence>
<evidence type="ECO:0000269" key="4">
    <source>
    </source>
</evidence>
<evidence type="ECO:0000269" key="5">
    <source>
    </source>
</evidence>
<evidence type="ECO:0000303" key="6">
    <source>
    </source>
</evidence>
<dbReference type="EMBL" id="D87023">
    <property type="status" value="NOT_ANNOTATED_CDS"/>
    <property type="molecule type" value="Genomic_DNA"/>
</dbReference>
<dbReference type="CCDS" id="CCDS54506.1">
    <molecule id="B9A064-1"/>
</dbReference>
<dbReference type="RefSeq" id="NP_001171597.1">
    <molecule id="B9A064-1"/>
    <property type="nucleotide sequence ID" value="NM_001178126.2"/>
</dbReference>
<dbReference type="PDB" id="7T17">
    <property type="method" value="EM"/>
    <property type="resolution" value="5.26 A"/>
    <property type="chains" value="I=109-214"/>
</dbReference>
<dbReference type="PDBsum" id="7T17"/>
<dbReference type="EMDB" id="EMD-13870"/>
<dbReference type="EMDB" id="EMD-13871"/>
<dbReference type="EMDB" id="EMD-16113"/>
<dbReference type="EMDB" id="EMD-16680"/>
<dbReference type="EMDB" id="EMD-19164"/>
<dbReference type="EMDB" id="EMD-19166"/>
<dbReference type="EMDB" id="EMD-20175"/>
<dbReference type="EMDB" id="EMD-20189"/>
<dbReference type="EMDB" id="EMD-20191"/>
<dbReference type="EMDB" id="EMD-20605"/>
<dbReference type="EMDB" id="EMD-20608"/>
<dbReference type="EMDB" id="EMD-21456"/>
<dbReference type="EMDB" id="EMD-21473"/>
<dbReference type="EMDB" id="EMD-21496"/>
<dbReference type="EMDB" id="EMD-21509"/>
<dbReference type="EMDB" id="EMD-22879"/>
<dbReference type="EMDB" id="EMD-23564"/>
<dbReference type="EMDB" id="EMD-23565"/>
<dbReference type="EMDB" id="EMD-23571"/>
<dbReference type="EMDB" id="EMD-23572"/>
<dbReference type="EMDB" id="EMD-23589"/>
<dbReference type="EMDB" id="EMD-23640"/>
<dbReference type="EMDB" id="EMD-25103"/>
<dbReference type="EMDB" id="EMD-25606"/>
<dbReference type="EMDB" id="EMD-25929"/>
<dbReference type="EMDB" id="EMD-26443"/>
<dbReference type="EMDB" id="EMD-26648"/>
<dbReference type="EMDB" id="EMD-26704"/>
<dbReference type="EMDB" id="EMD-27024"/>
<dbReference type="EMDB" id="EMD-27103"/>
<dbReference type="EMDB" id="EMD-27596"/>
<dbReference type="EMDB" id="EMD-27775"/>
<dbReference type="EMDB" id="EMD-29783"/>
<dbReference type="EMDB" id="EMD-31014"/>
<dbReference type="EMDB" id="EMD-31017"/>
<dbReference type="EMDB" id="EMD-31374"/>
<dbReference type="EMDB" id="EMD-31434"/>
<dbReference type="EMDB" id="EMD-31681"/>
<dbReference type="EMDB" id="EMD-32421"/>
<dbReference type="EMDB" id="EMD-32552"/>
<dbReference type="EMDB" id="EMD-32553"/>
<dbReference type="EMDB" id="EMD-32554"/>
<dbReference type="EMDB" id="EMD-33506"/>
<dbReference type="EMDB" id="EMD-33718"/>
<dbReference type="EMDB" id="EMD-33743"/>
<dbReference type="EMDB" id="EMD-33744"/>
<dbReference type="EMDB" id="EMD-33748"/>
<dbReference type="EMDB" id="EMD-33760"/>
<dbReference type="EMDB" id="EMD-33764"/>
<dbReference type="EMDB" id="EMD-33766"/>
<dbReference type="EMDB" id="EMD-33772"/>
<dbReference type="EMDB" id="EMD-34651"/>
<dbReference type="EMDB" id="EMD-34652"/>
<dbReference type="EMDB" id="EMD-38372"/>
<dbReference type="EMDB" id="EMD-41613"/>
<dbReference type="EMDB" id="EMD-41822"/>
<dbReference type="EMDB" id="EMD-42151"/>
<dbReference type="EMDB" id="EMD-43148"/>
<dbReference type="EMDB" id="EMD-43534"/>
<dbReference type="EMDB" id="EMD-43536"/>
<dbReference type="EMDB" id="EMD-43539"/>
<dbReference type="EMDB" id="EMD-43551"/>
<dbReference type="EMDB" id="EMD-43553"/>
<dbReference type="EMDB" id="EMD-43667"/>
<dbReference type="EMDB" id="EMD-43672"/>
<dbReference type="EMDB" id="EMD-44484"/>
<dbReference type="EMDB" id="EMD-45444"/>
<dbReference type="EMDB" id="EMD-48404"/>
<dbReference type="EMDB" id="EMD-60107"/>
<dbReference type="EMDB" id="EMD-60108"/>
<dbReference type="EMDB" id="EMD-60109"/>
<dbReference type="EMDB" id="EMD-60110"/>
<dbReference type="EMDB" id="EMD-60111"/>
<dbReference type="EMDB" id="EMD-60112"/>
<dbReference type="EMDB" id="EMD-7459"/>
<dbReference type="EMDB" id="EMD-7875"/>
<dbReference type="EMDB" id="EMD-7876"/>
<dbReference type="EMDB" id="EMD-8977"/>
<dbReference type="EMDB" id="EMD-9359"/>
<dbReference type="EMDB" id="EMD-9811"/>
<dbReference type="EMDB" id="EMD-9812"/>
<dbReference type="SMR" id="B9A064"/>
<dbReference type="BioGRID" id="1148096">
    <property type="interactions" value="172"/>
</dbReference>
<dbReference type="FunCoup" id="B9A064">
    <property type="interactions" value="259"/>
</dbReference>
<dbReference type="IntAct" id="B9A064">
    <property type="interactions" value="106"/>
</dbReference>
<dbReference type="MINT" id="B9A064"/>
<dbReference type="STRING" id="9606.ENSP00000431254"/>
<dbReference type="CarbonylDB" id="B9A064"/>
<dbReference type="GlyGen" id="B9A064">
    <property type="glycosylation" value="2 sites, 1 O-linked glycan (1 site)"/>
</dbReference>
<dbReference type="iPTMnet" id="B9A064"/>
<dbReference type="PhosphoSitePlus" id="B9A064"/>
<dbReference type="BioMuta" id="IGLL5"/>
<dbReference type="jPOST" id="B9A064"/>
<dbReference type="MassIVE" id="B9A064"/>
<dbReference type="PaxDb" id="9606-ENSP00000431254"/>
<dbReference type="PeptideAtlas" id="B9A064"/>
<dbReference type="PRIDE" id="B9A064"/>
<dbReference type="ProteomicsDB" id="7509">
    <molecule id="B9A064-1"/>
</dbReference>
<dbReference type="Pumba" id="B9A064"/>
<dbReference type="Antibodypedia" id="57108">
    <property type="antibodies" value="77 antibodies from 15 providers"/>
</dbReference>
<dbReference type="DNASU" id="100423062"/>
<dbReference type="Ensembl" id="ENST00000526893.6">
    <molecule id="B9A064-1"/>
    <property type="protein sequence ID" value="ENSP00000431254.1"/>
    <property type="gene ID" value="ENSG00000254709.8"/>
</dbReference>
<dbReference type="Ensembl" id="ENST00000531372.1">
    <molecule id="B9A064-2"/>
    <property type="protein sequence ID" value="ENSP00000434368.1"/>
    <property type="gene ID" value="ENSG00000254709.8"/>
</dbReference>
<dbReference type="GeneID" id="100423062"/>
<dbReference type="KEGG" id="hsa:100423062"/>
<dbReference type="MANE-Select" id="ENST00000526893.6">
    <property type="protein sequence ID" value="ENSP00000431254.1"/>
    <property type="RefSeq nucleotide sequence ID" value="NM_001178126.2"/>
    <property type="RefSeq protein sequence ID" value="NP_001171597.1"/>
</dbReference>
<dbReference type="UCSC" id="uc011aiw.3">
    <molecule id="B9A064-1"/>
    <property type="organism name" value="human"/>
</dbReference>
<dbReference type="AGR" id="HGNC:38476"/>
<dbReference type="CTD" id="100423062"/>
<dbReference type="DisGeNET" id="100423062"/>
<dbReference type="GeneCards" id="IGLL5"/>
<dbReference type="HGNC" id="HGNC:38476">
    <property type="gene designation" value="IGLL5"/>
</dbReference>
<dbReference type="HPA" id="ENSG00000254709">
    <property type="expression patterns" value="Tissue enhanced (intestine, lymphoid tissue, stomach)"/>
</dbReference>
<dbReference type="neXtProt" id="NX_B9A064"/>
<dbReference type="OpenTargets" id="ENSG00000254709"/>
<dbReference type="VEuPathDB" id="HostDB:ENSG00000254709"/>
<dbReference type="eggNOG" id="ENOG502SS4M">
    <property type="taxonomic scope" value="Eukaryota"/>
</dbReference>
<dbReference type="GeneTree" id="ENSGT00940000153307"/>
<dbReference type="HOGENOM" id="CLU_2526772_0_0_1"/>
<dbReference type="InParanoid" id="B9A064"/>
<dbReference type="OMA" id="ATITQGM"/>
<dbReference type="OrthoDB" id="13673at9604"/>
<dbReference type="PAN-GO" id="B9A064">
    <property type="GO annotations" value="11 GO annotations based on evolutionary models"/>
</dbReference>
<dbReference type="PhylomeDB" id="B9A064"/>
<dbReference type="TreeFam" id="TF335549"/>
<dbReference type="PathwayCommons" id="B9A064"/>
<dbReference type="SignaLink" id="B9A064"/>
<dbReference type="BioGRID-ORCS" id="100423062">
    <property type="hits" value="10 hits in 1138 CRISPR screens"/>
</dbReference>
<dbReference type="CD-CODE" id="232F8A39">
    <property type="entry name" value="P-body"/>
</dbReference>
<dbReference type="ChiTaRS" id="IGLL5">
    <property type="organism name" value="human"/>
</dbReference>
<dbReference type="GenomeRNAi" id="100423062"/>
<dbReference type="Pharos" id="B9A064">
    <property type="development level" value="Tbio"/>
</dbReference>
<dbReference type="PRO" id="PR:B9A064"/>
<dbReference type="Proteomes" id="UP000005640">
    <property type="component" value="Chromosome 22"/>
</dbReference>
<dbReference type="RNAct" id="B9A064">
    <property type="molecule type" value="protein"/>
</dbReference>
<dbReference type="Bgee" id="ENSG00000254709">
    <property type="expression patterns" value="Expressed in duodenum and 88 other cell types or tissues"/>
</dbReference>
<dbReference type="ExpressionAtlas" id="B9A064">
    <property type="expression patterns" value="baseline and differential"/>
</dbReference>
<dbReference type="GO" id="GO:0070062">
    <property type="term" value="C:extracellular exosome"/>
    <property type="evidence" value="ECO:0007005"/>
    <property type="project" value="UniProtKB"/>
</dbReference>
<dbReference type="GO" id="GO:0071735">
    <property type="term" value="C:IgG immunoglobulin complex"/>
    <property type="evidence" value="ECO:0000318"/>
    <property type="project" value="GO_Central"/>
</dbReference>
<dbReference type="GO" id="GO:0003823">
    <property type="term" value="F:antigen binding"/>
    <property type="evidence" value="ECO:0000318"/>
    <property type="project" value="GO_Central"/>
</dbReference>
<dbReference type="GO" id="GO:0016064">
    <property type="term" value="P:immunoglobulin mediated immune response"/>
    <property type="evidence" value="ECO:0000318"/>
    <property type="project" value="GO_Central"/>
</dbReference>
<dbReference type="CDD" id="cd07699">
    <property type="entry name" value="IgC1_L"/>
    <property type="match status" value="1"/>
</dbReference>
<dbReference type="FunFam" id="2.60.40.10:FF:000283">
    <property type="entry name" value="Immunoglobulin kappa constant"/>
    <property type="match status" value="1"/>
</dbReference>
<dbReference type="Gene3D" id="2.60.40.10">
    <property type="entry name" value="Immunoglobulins"/>
    <property type="match status" value="1"/>
</dbReference>
<dbReference type="InterPro" id="IPR007110">
    <property type="entry name" value="Ig-like_dom"/>
</dbReference>
<dbReference type="InterPro" id="IPR036179">
    <property type="entry name" value="Ig-like_dom_sf"/>
</dbReference>
<dbReference type="InterPro" id="IPR013783">
    <property type="entry name" value="Ig-like_fold"/>
</dbReference>
<dbReference type="InterPro" id="IPR003006">
    <property type="entry name" value="Ig/MHC_CS"/>
</dbReference>
<dbReference type="InterPro" id="IPR003597">
    <property type="entry name" value="Ig_C1-set"/>
</dbReference>
<dbReference type="InterPro" id="IPR050160">
    <property type="entry name" value="MHC/Immunoglobulin"/>
</dbReference>
<dbReference type="PANTHER" id="PTHR19944:SF98">
    <property type="entry name" value="IG-LIKE DOMAIN-CONTAINING PROTEIN"/>
    <property type="match status" value="1"/>
</dbReference>
<dbReference type="PANTHER" id="PTHR19944">
    <property type="entry name" value="MHC CLASS II-RELATED"/>
    <property type="match status" value="1"/>
</dbReference>
<dbReference type="Pfam" id="PF07654">
    <property type="entry name" value="C1-set"/>
    <property type="match status" value="1"/>
</dbReference>
<dbReference type="SMART" id="SM00407">
    <property type="entry name" value="IGc1"/>
    <property type="match status" value="1"/>
</dbReference>
<dbReference type="SUPFAM" id="SSF48726">
    <property type="entry name" value="Immunoglobulin"/>
    <property type="match status" value="1"/>
</dbReference>
<dbReference type="PROSITE" id="PS50835">
    <property type="entry name" value="IG_LIKE"/>
    <property type="match status" value="1"/>
</dbReference>
<dbReference type="PROSITE" id="PS00290">
    <property type="entry name" value="IG_MHC"/>
    <property type="match status" value="1"/>
</dbReference>
<keyword id="KW-0002">3D-structure</keyword>
<keyword id="KW-0025">Alternative splicing</keyword>
<keyword id="KW-1015">Disulfide bond</keyword>
<keyword id="KW-0393">Immunoglobulin domain</keyword>
<keyword id="KW-1267">Proteomics identification</keyword>
<keyword id="KW-1185">Reference proteome</keyword>
<keyword id="KW-0964">Secreted</keyword>
<keyword id="KW-0732">Signal</keyword>
<feature type="signal peptide" evidence="2">
    <location>
        <begin position="1"/>
        <end position="35"/>
    </location>
</feature>
<feature type="chain" id="PRO_0000405596" description="Immunoglobulin lambda-like polypeptide 5">
    <location>
        <begin position="36"/>
        <end position="214"/>
    </location>
</feature>
<feature type="domain" description="Ig-like C1-type">
    <location>
        <begin position="115"/>
        <end position="209"/>
    </location>
</feature>
<feature type="region of interest" description="J region" evidence="1">
    <location>
        <begin position="98"/>
        <end position="109"/>
    </location>
</feature>
<feature type="region of interest" description="C region" evidence="1">
    <location>
        <begin position="110"/>
        <end position="214"/>
    </location>
</feature>
<feature type="disulfide bond" evidence="3">
    <location>
        <begin position="136"/>
        <end position="195"/>
    </location>
</feature>
<feature type="splice variant" id="VSP_040709" description="In isoform 2." evidence="6">
    <original>LLLQPSPQRADPRCW</original>
    <variation>SAQGQPHCHSVPALL</variation>
    <location>
        <begin position="70"/>
        <end position="84"/>
    </location>
</feature>
<feature type="splice variant" id="VSP_040710" description="In isoform 2." evidence="6">
    <location>
        <begin position="85"/>
        <end position="214"/>
    </location>
</feature>
<organism>
    <name type="scientific">Homo sapiens</name>
    <name type="common">Human</name>
    <dbReference type="NCBI Taxonomy" id="9606"/>
    <lineage>
        <taxon>Eukaryota</taxon>
        <taxon>Metazoa</taxon>
        <taxon>Chordata</taxon>
        <taxon>Craniata</taxon>
        <taxon>Vertebrata</taxon>
        <taxon>Euteleostomi</taxon>
        <taxon>Mammalia</taxon>
        <taxon>Eutheria</taxon>
        <taxon>Euarchontoglires</taxon>
        <taxon>Primates</taxon>
        <taxon>Haplorrhini</taxon>
        <taxon>Catarrhini</taxon>
        <taxon>Hominidae</taxon>
        <taxon>Homo</taxon>
    </lineage>
</organism>
<accession>B9A064</accession>
<name>IGLL5_HUMAN</name>
<gene>
    <name type="primary">IGLL5</name>
</gene>
<proteinExistence type="evidence at protein level"/>
<sequence length="214" mass="23063">MRPKTGQVGCETPEELGPGPRQRWPLLLLGLAMVAHGLLRPMVAPQSGDPDPGASVGSSRSSLRSLWGRLLLQPSPQRADPRCWPRGFWSEPQSLCYVFGTGTKVTVLGQPKANPTVTLFPPSSEELQANKATLVCLISDFYPGAVTVAWKADGSPVKAGVETTKPSKQSNNKYAASSYLSLTPEQWKSHRSYSCQVTHEGSTVEKTVAPTECS</sequence>
<protein>
    <recommendedName>
        <fullName>Immunoglobulin lambda-like polypeptide 5</fullName>
    </recommendedName>
    <alternativeName>
        <fullName>G lambda-1</fullName>
    </alternativeName>
    <alternativeName>
        <fullName>Germline immunoglobulin lambda 1</fullName>
    </alternativeName>
</protein>
<reference key="1">
    <citation type="journal article" date="1991" name="Eur. J. Immunol.">
        <title>Expression of a novel type of immunoglobulin C lambda transcripts in human mature B lymphocytes producing kappa light chains.</title>
        <authorList>
            <person name="Guglielmi P."/>
            <person name="Davi F."/>
        </authorList>
    </citation>
    <scope>NUCLEOTIDE SEQUENCE [MRNA] (ISOFORM 2)</scope>
    <scope>TISSUE SPECIFICITY</scope>
</reference>
<reference key="2">
    <citation type="journal article" date="1991" name="J. Exp. Med.">
        <title>Genomic structure of the human Ig lambda 1 gene suggests that it may be expressed as an Ig lambda 14.1-like protein or as a canonical B cell Ig lambda light chain: implications for Ig lambda gene evolution.</title>
        <authorList>
            <person name="Evans R.J."/>
            <person name="Hollis G.F."/>
        </authorList>
    </citation>
    <scope>NUCLEOTIDE SEQUENCE [GENOMIC DNA] (ISOFORM 1)</scope>
    <scope>TISSUE SPECIFICITY</scope>
</reference>
<reference key="3">
    <citation type="journal article" date="1999" name="Nature">
        <title>The DNA sequence of human chromosome 22.</title>
        <authorList>
            <person name="Dunham I."/>
            <person name="Hunt A.R."/>
            <person name="Collins J.E."/>
            <person name="Bruskiewich R."/>
            <person name="Beare D.M."/>
            <person name="Clamp M."/>
            <person name="Smink L.J."/>
            <person name="Ainscough R."/>
            <person name="Almeida J.P."/>
            <person name="Babbage A.K."/>
            <person name="Bagguley C."/>
            <person name="Bailey J."/>
            <person name="Barlow K.F."/>
            <person name="Bates K.N."/>
            <person name="Beasley O.P."/>
            <person name="Bird C.P."/>
            <person name="Blakey S.E."/>
            <person name="Bridgeman A.M."/>
            <person name="Buck D."/>
            <person name="Burgess J."/>
            <person name="Burrill W.D."/>
            <person name="Burton J."/>
            <person name="Carder C."/>
            <person name="Carter N.P."/>
            <person name="Chen Y."/>
            <person name="Clark G."/>
            <person name="Clegg S.M."/>
            <person name="Cobley V.E."/>
            <person name="Cole C.G."/>
            <person name="Collier R.E."/>
            <person name="Connor R."/>
            <person name="Conroy D."/>
            <person name="Corby N.R."/>
            <person name="Coville G.J."/>
            <person name="Cox A.V."/>
            <person name="Davis J."/>
            <person name="Dawson E."/>
            <person name="Dhami P.D."/>
            <person name="Dockree C."/>
            <person name="Dodsworth S.J."/>
            <person name="Durbin R.M."/>
            <person name="Ellington A.G."/>
            <person name="Evans K.L."/>
            <person name="Fey J.M."/>
            <person name="Fleming K."/>
            <person name="French L."/>
            <person name="Garner A.A."/>
            <person name="Gilbert J.G.R."/>
            <person name="Goward M.E."/>
            <person name="Grafham D.V."/>
            <person name="Griffiths M.N.D."/>
            <person name="Hall C."/>
            <person name="Hall R.E."/>
            <person name="Hall-Tamlyn G."/>
            <person name="Heathcott R.W."/>
            <person name="Ho S."/>
            <person name="Holmes S."/>
            <person name="Hunt S.E."/>
            <person name="Jones M.C."/>
            <person name="Kershaw J."/>
            <person name="Kimberley A.M."/>
            <person name="King A."/>
            <person name="Laird G.K."/>
            <person name="Langford C.F."/>
            <person name="Leversha M.A."/>
            <person name="Lloyd C."/>
            <person name="Lloyd D.M."/>
            <person name="Martyn I.D."/>
            <person name="Mashreghi-Mohammadi M."/>
            <person name="Matthews L.H."/>
            <person name="Mccann O.T."/>
            <person name="Mcclay J."/>
            <person name="Mclaren S."/>
            <person name="McMurray A.A."/>
            <person name="Milne S.A."/>
            <person name="Mortimore B.J."/>
            <person name="Odell C.N."/>
            <person name="Pavitt R."/>
            <person name="Pearce A.V."/>
            <person name="Pearson D."/>
            <person name="Phillimore B.J.C.T."/>
            <person name="Phillips S.H."/>
            <person name="Plumb R.W."/>
            <person name="Ramsay H."/>
            <person name="Ramsey Y."/>
            <person name="Rogers L."/>
            <person name="Ross M.T."/>
            <person name="Scott C.E."/>
            <person name="Sehra H.K."/>
            <person name="Skuce C.D."/>
            <person name="Smalley S."/>
            <person name="Smith M.L."/>
            <person name="Soderlund C."/>
            <person name="Spragon L."/>
            <person name="Steward C.A."/>
            <person name="Sulston J.E."/>
            <person name="Swann R.M."/>
            <person name="Vaudin M."/>
            <person name="Wall M."/>
            <person name="Wallis J.M."/>
            <person name="Whiteley M.N."/>
            <person name="Willey D.L."/>
            <person name="Williams L."/>
            <person name="Williams S.A."/>
            <person name="Williamson H."/>
            <person name="Wilmer T.E."/>
            <person name="Wilming L."/>
            <person name="Wright C.L."/>
            <person name="Hubbard T."/>
            <person name="Bentley D.R."/>
            <person name="Beck S."/>
            <person name="Rogers J."/>
            <person name="Shimizu N."/>
            <person name="Minoshima S."/>
            <person name="Kawasaki K."/>
            <person name="Sasaki T."/>
            <person name="Asakawa S."/>
            <person name="Kudoh J."/>
            <person name="Shintani A."/>
            <person name="Shibuya K."/>
            <person name="Yoshizaki Y."/>
            <person name="Aoki N."/>
            <person name="Mitsuyama S."/>
            <person name="Roe B.A."/>
            <person name="Chen F."/>
            <person name="Chu L."/>
            <person name="Crabtree J."/>
            <person name="Deschamps S."/>
            <person name="Do A."/>
            <person name="Do T."/>
            <person name="Dorman A."/>
            <person name="Fang F."/>
            <person name="Fu Y."/>
            <person name="Hu P."/>
            <person name="Hua A."/>
            <person name="Kenton S."/>
            <person name="Lai H."/>
            <person name="Lao H.I."/>
            <person name="Lewis J."/>
            <person name="Lewis S."/>
            <person name="Lin S.-P."/>
            <person name="Loh P."/>
            <person name="Malaj E."/>
            <person name="Nguyen T."/>
            <person name="Pan H."/>
            <person name="Phan S."/>
            <person name="Qi S."/>
            <person name="Qian Y."/>
            <person name="Ray L."/>
            <person name="Ren Q."/>
            <person name="Shaull S."/>
            <person name="Sloan D."/>
            <person name="Song L."/>
            <person name="Wang Q."/>
            <person name="Wang Y."/>
            <person name="Wang Z."/>
            <person name="White J."/>
            <person name="Willingham D."/>
            <person name="Wu H."/>
            <person name="Yao Z."/>
            <person name="Zhan M."/>
            <person name="Zhang G."/>
            <person name="Chissoe S."/>
            <person name="Murray J."/>
            <person name="Miller N."/>
            <person name="Minx P."/>
            <person name="Fulton R."/>
            <person name="Johnson D."/>
            <person name="Bemis G."/>
            <person name="Bentley D."/>
            <person name="Bradshaw H."/>
            <person name="Bourne S."/>
            <person name="Cordes M."/>
            <person name="Du Z."/>
            <person name="Fulton L."/>
            <person name="Goela D."/>
            <person name="Graves T."/>
            <person name="Hawkins J."/>
            <person name="Hinds K."/>
            <person name="Kemp K."/>
            <person name="Latreille P."/>
            <person name="Layman D."/>
            <person name="Ozersky P."/>
            <person name="Rohlfing T."/>
            <person name="Scheet P."/>
            <person name="Walker C."/>
            <person name="Wamsley A."/>
            <person name="Wohldmann P."/>
            <person name="Pepin K."/>
            <person name="Nelson J."/>
            <person name="Korf I."/>
            <person name="Bedell J.A."/>
            <person name="Hillier L.W."/>
            <person name="Mardis E."/>
            <person name="Waterston R."/>
            <person name="Wilson R."/>
            <person name="Emanuel B.S."/>
            <person name="Shaikh T."/>
            <person name="Kurahashi H."/>
            <person name="Saitta S."/>
            <person name="Budarf M.L."/>
            <person name="McDermid H.E."/>
            <person name="Johnson A."/>
            <person name="Wong A.C.C."/>
            <person name="Morrow B.E."/>
            <person name="Edelmann L."/>
            <person name="Kim U.J."/>
            <person name="Shizuya H."/>
            <person name="Simon M.I."/>
            <person name="Dumanski J.P."/>
            <person name="Peyrard M."/>
            <person name="Kedra D."/>
            <person name="Seroussi E."/>
            <person name="Fransson I."/>
            <person name="Tapia I."/>
            <person name="Bruder C.E."/>
            <person name="O'Brien K.P."/>
            <person name="Wilkinson P."/>
            <person name="Bodenteich A."/>
            <person name="Hartman K."/>
            <person name="Hu X."/>
            <person name="Khan A.S."/>
            <person name="Lane L."/>
            <person name="Tilahun Y."/>
            <person name="Wright H."/>
        </authorList>
    </citation>
    <scope>NUCLEOTIDE SEQUENCE [LARGE SCALE GENOMIC DNA]</scope>
</reference>
<comment type="subcellular location">
    <subcellularLocation>
        <location evidence="1">Secreted</location>
    </subcellularLocation>
</comment>
<comment type="alternative products">
    <event type="alternative splicing"/>
    <isoform>
        <id>B9A064-1</id>
        <name>1</name>
        <sequence type="displayed"/>
    </isoform>
    <isoform>
        <id>B9A064-2</id>
        <name>2</name>
        <sequence type="described" ref="VSP_040709 VSP_040710"/>
    </isoform>
</comment>
<comment type="tissue specificity">
    <text evidence="4 5">Contrary to IGLL1, not expressed in pre-B-cells.</text>
</comment>
<comment type="miscellaneous">
    <text>Located within the immunoglobulin lambda locus, but does not require somatic rearrangement for expression.</text>
</comment>